<comment type="function">
    <text evidence="1">Negatively regulates transcription of bacterial ribonucleotide reductase nrd genes and operons by binding to NrdR-boxes.</text>
</comment>
<comment type="cofactor">
    <cofactor evidence="1">
        <name>Zn(2+)</name>
        <dbReference type="ChEBI" id="CHEBI:29105"/>
    </cofactor>
    <text evidence="1">Binds 1 zinc ion.</text>
</comment>
<comment type="similarity">
    <text evidence="1">Belongs to the NrdR family.</text>
</comment>
<protein>
    <recommendedName>
        <fullName evidence="1">Transcriptional repressor NrdR</fullName>
    </recommendedName>
</protein>
<keyword id="KW-0067">ATP-binding</keyword>
<keyword id="KW-0238">DNA-binding</keyword>
<keyword id="KW-0479">Metal-binding</keyword>
<keyword id="KW-0547">Nucleotide-binding</keyword>
<keyword id="KW-1185">Reference proteome</keyword>
<keyword id="KW-0678">Repressor</keyword>
<keyword id="KW-0804">Transcription</keyword>
<keyword id="KW-0805">Transcription regulation</keyword>
<keyword id="KW-0862">Zinc</keyword>
<keyword id="KW-0863">Zinc-finger</keyword>
<evidence type="ECO:0000255" key="1">
    <source>
        <dbReference type="HAMAP-Rule" id="MF_00440"/>
    </source>
</evidence>
<organism>
    <name type="scientific">Photorhabdus laumondii subsp. laumondii (strain DSM 15139 / CIP 105565 / TT01)</name>
    <name type="common">Photorhabdus luminescens subsp. laumondii</name>
    <dbReference type="NCBI Taxonomy" id="243265"/>
    <lineage>
        <taxon>Bacteria</taxon>
        <taxon>Pseudomonadati</taxon>
        <taxon>Pseudomonadota</taxon>
        <taxon>Gammaproteobacteria</taxon>
        <taxon>Enterobacterales</taxon>
        <taxon>Morganellaceae</taxon>
        <taxon>Photorhabdus</taxon>
    </lineage>
</organism>
<gene>
    <name evidence="1" type="primary">nrdR</name>
    <name type="ordered locus">plu3900</name>
</gene>
<sequence>MHCPFCAAVDTKVIDSRLVGDGSQVRRRRQCLECHERFTTFEMAELVMPRVIKSDDIREPFDEEKLRRGMQKALEKRPVSSDDVEMAISYIKSQLRATGEREVPSKMIGNLVMDELKKLDKVAYIRFASVYRSFEDIREFGEEIARLQG</sequence>
<proteinExistence type="inferred from homology"/>
<dbReference type="EMBL" id="BX571872">
    <property type="protein sequence ID" value="CAE16272.1"/>
    <property type="molecule type" value="Genomic_DNA"/>
</dbReference>
<dbReference type="RefSeq" id="WP_011148035.1">
    <property type="nucleotide sequence ID" value="NC_005126.1"/>
</dbReference>
<dbReference type="SMR" id="Q7N0I7"/>
<dbReference type="STRING" id="243265.plu3900"/>
<dbReference type="GeneID" id="48850129"/>
<dbReference type="KEGG" id="plu:plu3900"/>
<dbReference type="eggNOG" id="COG1327">
    <property type="taxonomic scope" value="Bacteria"/>
</dbReference>
<dbReference type="HOGENOM" id="CLU_108412_0_0_6"/>
<dbReference type="OrthoDB" id="9807461at2"/>
<dbReference type="Proteomes" id="UP000002514">
    <property type="component" value="Chromosome"/>
</dbReference>
<dbReference type="GO" id="GO:0005524">
    <property type="term" value="F:ATP binding"/>
    <property type="evidence" value="ECO:0007669"/>
    <property type="project" value="UniProtKB-KW"/>
</dbReference>
<dbReference type="GO" id="GO:0003677">
    <property type="term" value="F:DNA binding"/>
    <property type="evidence" value="ECO:0007669"/>
    <property type="project" value="UniProtKB-KW"/>
</dbReference>
<dbReference type="GO" id="GO:0008270">
    <property type="term" value="F:zinc ion binding"/>
    <property type="evidence" value="ECO:0007669"/>
    <property type="project" value="UniProtKB-UniRule"/>
</dbReference>
<dbReference type="GO" id="GO:0045892">
    <property type="term" value="P:negative regulation of DNA-templated transcription"/>
    <property type="evidence" value="ECO:0007669"/>
    <property type="project" value="UniProtKB-UniRule"/>
</dbReference>
<dbReference type="HAMAP" id="MF_00440">
    <property type="entry name" value="NrdR"/>
    <property type="match status" value="1"/>
</dbReference>
<dbReference type="InterPro" id="IPR005144">
    <property type="entry name" value="ATP-cone_dom"/>
</dbReference>
<dbReference type="InterPro" id="IPR055173">
    <property type="entry name" value="NrdR-like_N"/>
</dbReference>
<dbReference type="InterPro" id="IPR003796">
    <property type="entry name" value="RNR_NrdR-like"/>
</dbReference>
<dbReference type="NCBIfam" id="TIGR00244">
    <property type="entry name" value="transcriptional regulator NrdR"/>
    <property type="match status" value="1"/>
</dbReference>
<dbReference type="PANTHER" id="PTHR30455">
    <property type="entry name" value="TRANSCRIPTIONAL REPRESSOR NRDR"/>
    <property type="match status" value="1"/>
</dbReference>
<dbReference type="PANTHER" id="PTHR30455:SF2">
    <property type="entry name" value="TRANSCRIPTIONAL REPRESSOR NRDR"/>
    <property type="match status" value="1"/>
</dbReference>
<dbReference type="Pfam" id="PF03477">
    <property type="entry name" value="ATP-cone"/>
    <property type="match status" value="1"/>
</dbReference>
<dbReference type="Pfam" id="PF22811">
    <property type="entry name" value="Zn_ribbon_NrdR"/>
    <property type="match status" value="1"/>
</dbReference>
<dbReference type="PROSITE" id="PS51161">
    <property type="entry name" value="ATP_CONE"/>
    <property type="match status" value="1"/>
</dbReference>
<name>NRDR_PHOLL</name>
<feature type="chain" id="PRO_0000182329" description="Transcriptional repressor NrdR">
    <location>
        <begin position="1"/>
        <end position="149"/>
    </location>
</feature>
<feature type="domain" description="ATP-cone" evidence="1">
    <location>
        <begin position="49"/>
        <end position="139"/>
    </location>
</feature>
<feature type="zinc finger region" evidence="1">
    <location>
        <begin position="3"/>
        <end position="34"/>
    </location>
</feature>
<accession>Q7N0I7</accession>
<reference key="1">
    <citation type="journal article" date="2003" name="Nat. Biotechnol.">
        <title>The genome sequence of the entomopathogenic bacterium Photorhabdus luminescens.</title>
        <authorList>
            <person name="Duchaud E."/>
            <person name="Rusniok C."/>
            <person name="Frangeul L."/>
            <person name="Buchrieser C."/>
            <person name="Givaudan A."/>
            <person name="Taourit S."/>
            <person name="Bocs S."/>
            <person name="Boursaux-Eude C."/>
            <person name="Chandler M."/>
            <person name="Charles J.-F."/>
            <person name="Dassa E."/>
            <person name="Derose R."/>
            <person name="Derzelle S."/>
            <person name="Freyssinet G."/>
            <person name="Gaudriault S."/>
            <person name="Medigue C."/>
            <person name="Lanois A."/>
            <person name="Powell K."/>
            <person name="Siguier P."/>
            <person name="Vincent R."/>
            <person name="Wingate V."/>
            <person name="Zouine M."/>
            <person name="Glaser P."/>
            <person name="Boemare N."/>
            <person name="Danchin A."/>
            <person name="Kunst F."/>
        </authorList>
    </citation>
    <scope>NUCLEOTIDE SEQUENCE [LARGE SCALE GENOMIC DNA]</scope>
    <source>
        <strain>DSM 15139 / CIP 105565 / TT01</strain>
    </source>
</reference>